<name>RS28B_YEAST</name>
<keyword id="KW-0002">3D-structure</keyword>
<keyword id="KW-0007">Acetylation</keyword>
<keyword id="KW-0963">Cytoplasm</keyword>
<keyword id="KW-1185">Reference proteome</keyword>
<keyword id="KW-0687">Ribonucleoprotein</keyword>
<keyword id="KW-0689">Ribosomal protein</keyword>
<gene>
    <name evidence="6" type="primary">RPS28B</name>
    <name type="synonym">RPS33B</name>
    <name type="ordered locus">YLR264W</name>
    <name type="ORF">L8479.5</name>
</gene>
<sequence>MDSKTPVTLAKVIKVLGRTGSRGGVTQVRVEFLEDTSRTIVRNVKGPVRENDILVLMESEREARRLR</sequence>
<reference key="1">
    <citation type="journal article" date="1997" name="Nature">
        <title>The nucleotide sequence of Saccharomyces cerevisiae chromosome XII.</title>
        <authorList>
            <person name="Johnston M."/>
            <person name="Hillier L.W."/>
            <person name="Riles L."/>
            <person name="Albermann K."/>
            <person name="Andre B."/>
            <person name="Ansorge W."/>
            <person name="Benes V."/>
            <person name="Brueckner M."/>
            <person name="Delius H."/>
            <person name="Dubois E."/>
            <person name="Duesterhoeft A."/>
            <person name="Entian K.-D."/>
            <person name="Floeth M."/>
            <person name="Goffeau A."/>
            <person name="Hebling U."/>
            <person name="Heumann K."/>
            <person name="Heuss-Neitzel D."/>
            <person name="Hilbert H."/>
            <person name="Hilger F."/>
            <person name="Kleine K."/>
            <person name="Koetter P."/>
            <person name="Louis E.J."/>
            <person name="Messenguy F."/>
            <person name="Mewes H.-W."/>
            <person name="Miosga T."/>
            <person name="Moestl D."/>
            <person name="Mueller-Auer S."/>
            <person name="Nentwich U."/>
            <person name="Obermaier B."/>
            <person name="Piravandi E."/>
            <person name="Pohl T.M."/>
            <person name="Portetelle D."/>
            <person name="Purnelle B."/>
            <person name="Rechmann S."/>
            <person name="Rieger M."/>
            <person name="Rinke M."/>
            <person name="Rose M."/>
            <person name="Scharfe M."/>
            <person name="Scherens B."/>
            <person name="Scholler P."/>
            <person name="Schwager C."/>
            <person name="Schwarz S."/>
            <person name="Underwood A.P."/>
            <person name="Urrestarazu L.A."/>
            <person name="Vandenbol M."/>
            <person name="Verhasselt P."/>
            <person name="Vierendeels F."/>
            <person name="Voet M."/>
            <person name="Volckaert G."/>
            <person name="Voss H."/>
            <person name="Wambutt R."/>
            <person name="Wedler E."/>
            <person name="Wedler H."/>
            <person name="Zimmermann F.K."/>
            <person name="Zollner A."/>
            <person name="Hani J."/>
            <person name="Hoheisel J.D."/>
        </authorList>
    </citation>
    <scope>NUCLEOTIDE SEQUENCE [LARGE SCALE GENOMIC DNA]</scope>
    <source>
        <strain>ATCC 204508 / S288c</strain>
    </source>
</reference>
<reference key="2">
    <citation type="journal article" date="2014" name="G3 (Bethesda)">
        <title>The reference genome sequence of Saccharomyces cerevisiae: Then and now.</title>
        <authorList>
            <person name="Engel S.R."/>
            <person name="Dietrich F.S."/>
            <person name="Fisk D.G."/>
            <person name="Binkley G."/>
            <person name="Balakrishnan R."/>
            <person name="Costanzo M.C."/>
            <person name="Dwight S.S."/>
            <person name="Hitz B.C."/>
            <person name="Karra K."/>
            <person name="Nash R.S."/>
            <person name="Weng S."/>
            <person name="Wong E.D."/>
            <person name="Lloyd P."/>
            <person name="Skrzypek M.S."/>
            <person name="Miyasato S.R."/>
            <person name="Simison M."/>
            <person name="Cherry J.M."/>
        </authorList>
    </citation>
    <scope>GENOME REANNOTATION</scope>
    <source>
        <strain>ATCC 204508 / S288c</strain>
    </source>
</reference>
<reference key="3">
    <citation type="journal article" date="1998" name="Yeast">
        <title>The list of cytoplasmic ribosomal proteins of Saccharomyces cerevisiae.</title>
        <authorList>
            <person name="Planta R.J."/>
            <person name="Mager W.H."/>
        </authorList>
    </citation>
    <scope>NOMENCLATURE</scope>
    <scope>SUBUNIT</scope>
</reference>
<reference key="4">
    <citation type="journal article" date="1999" name="J. Biol. Chem.">
        <title>The action of N-terminal acetyltransferases on yeast ribosomal proteins.</title>
        <authorList>
            <person name="Arnold R.J."/>
            <person name="Polevoda B."/>
            <person name="Reilly J.P."/>
            <person name="Sherman F."/>
        </authorList>
    </citation>
    <scope>ACETYLATION AT MET-1 BY NATB</scope>
</reference>
<reference key="5">
    <citation type="journal article" date="2003" name="Nature">
        <title>Global analysis of protein localization in budding yeast.</title>
        <authorList>
            <person name="Huh W.-K."/>
            <person name="Falvo J.V."/>
            <person name="Gerke L.C."/>
            <person name="Carroll A.S."/>
            <person name="Howson R.W."/>
            <person name="Weissman J.S."/>
            <person name="O'Shea E.K."/>
        </authorList>
    </citation>
    <scope>SUBCELLULAR LOCATION [LARGE SCALE ANALYSIS]</scope>
</reference>
<reference key="6">
    <citation type="journal article" date="2003" name="Nature">
        <title>Global analysis of protein expression in yeast.</title>
        <authorList>
            <person name="Ghaemmaghami S."/>
            <person name="Huh W.-K."/>
            <person name="Bower K."/>
            <person name="Howson R.W."/>
            <person name="Belle A."/>
            <person name="Dephoure N."/>
            <person name="O'Shea E.K."/>
            <person name="Weissman J.S."/>
        </authorList>
    </citation>
    <scope>LEVEL OF PROTEIN EXPRESSION [LARGE SCALE ANALYSIS]</scope>
</reference>
<reference key="7">
    <citation type="journal article" date="2011" name="Science">
        <title>The structure of the eukaryotic ribosome at 3.0 A resolution.</title>
        <authorList>
            <person name="Ben-Shem A."/>
            <person name="Garreau de Loubresse N."/>
            <person name="Melnikov S."/>
            <person name="Jenner L."/>
            <person name="Yusupova G."/>
            <person name="Yusupov M."/>
        </authorList>
    </citation>
    <scope>SUBUNIT</scope>
    <scope>SUBCELLULAR LOCATION</scope>
</reference>
<reference key="8">
    <citation type="journal article" date="2012" name="Proc. Natl. Acad. Sci. U.S.A.">
        <title>N-terminal acetylome analyses and functional insights of the N-terminal acetyltransferase NatB.</title>
        <authorList>
            <person name="Van Damme P."/>
            <person name="Lasa M."/>
            <person name="Polevoda B."/>
            <person name="Gazquez C."/>
            <person name="Elosegui-Artola A."/>
            <person name="Kim D.S."/>
            <person name="De Juan-Pardo E."/>
            <person name="Demeyer K."/>
            <person name="Hole K."/>
            <person name="Larrea E."/>
            <person name="Timmerman E."/>
            <person name="Prieto J."/>
            <person name="Arnesen T."/>
            <person name="Sherman F."/>
            <person name="Gevaert K."/>
            <person name="Aldabe R."/>
        </authorList>
    </citation>
    <scope>ACETYLATION [LARGE SCALE ANALYSIS] AT MET-1</scope>
    <scope>IDENTIFICATION BY MASS SPECTROMETRY [LARGE SCALE ANALYSIS]</scope>
</reference>
<reference key="9">
    <citation type="journal article" date="2014" name="Curr. Opin. Struct. Biol.">
        <title>A new system for naming ribosomal proteins.</title>
        <authorList>
            <person name="Ban N."/>
            <person name="Beckmann R."/>
            <person name="Cate J.H.D."/>
            <person name="Dinman J.D."/>
            <person name="Dragon F."/>
            <person name="Ellis S.R."/>
            <person name="Lafontaine D.L.J."/>
            <person name="Lindahl L."/>
            <person name="Liljas A."/>
            <person name="Lipton J.M."/>
            <person name="McAlear M.A."/>
            <person name="Moore P.B."/>
            <person name="Noller H.F."/>
            <person name="Ortega J."/>
            <person name="Panse V.G."/>
            <person name="Ramakrishnan V."/>
            <person name="Spahn C.M.T."/>
            <person name="Steitz T.A."/>
            <person name="Tchorzewski M."/>
            <person name="Tollervey D."/>
            <person name="Warren A.J."/>
            <person name="Williamson J.R."/>
            <person name="Wilson D."/>
            <person name="Yonath A."/>
            <person name="Yusupov M."/>
        </authorList>
    </citation>
    <scope>NOMENCLATURE</scope>
</reference>
<protein>
    <recommendedName>
        <fullName evidence="5">Small ribosomal subunit protein eS28B</fullName>
    </recommendedName>
    <alternativeName>
        <fullName evidence="6">40S ribosomal protein S28-B</fullName>
    </alternativeName>
    <alternativeName>
        <fullName>S33</fullName>
    </alternativeName>
    <alternativeName>
        <fullName>YS27</fullName>
    </alternativeName>
</protein>
<feature type="chain" id="PRO_0000136843" description="Small ribosomal subunit protein eS28B">
    <location>
        <begin position="1"/>
        <end position="67"/>
    </location>
</feature>
<feature type="modified residue" description="N-acetylmethionine" evidence="1 10">
    <location>
        <position position="1"/>
    </location>
</feature>
<accession>P0C0X0</accession>
<accession>D6VYR1</accession>
<accession>P02380</accession>
<evidence type="ECO:0000269" key="1">
    <source>
    </source>
</evidence>
<evidence type="ECO:0000269" key="2">
    <source>
    </source>
</evidence>
<evidence type="ECO:0000269" key="3">
    <source>
    </source>
</evidence>
<evidence type="ECO:0000269" key="4">
    <source>
    </source>
</evidence>
<evidence type="ECO:0000303" key="5">
    <source>
    </source>
</evidence>
<evidence type="ECO:0000303" key="6">
    <source>
    </source>
</evidence>
<evidence type="ECO:0000305" key="7"/>
<evidence type="ECO:0000305" key="8">
    <source>
    </source>
</evidence>
<evidence type="ECO:0000305" key="9">
    <source>
    </source>
</evidence>
<evidence type="ECO:0007744" key="10">
    <source>
    </source>
</evidence>
<proteinExistence type="evidence at protein level"/>
<dbReference type="EMBL" id="U17244">
    <property type="protein sequence ID" value="AAB67375.1"/>
    <property type="molecule type" value="Genomic_DNA"/>
</dbReference>
<dbReference type="EMBL" id="BK006945">
    <property type="protein sequence ID" value="DAA09577.1"/>
    <property type="molecule type" value="Genomic_DNA"/>
</dbReference>
<dbReference type="PIR" id="S51401">
    <property type="entry name" value="S51401"/>
</dbReference>
<dbReference type="RefSeq" id="NP_013366.1">
    <property type="nucleotide sequence ID" value="NM_001182151.1"/>
</dbReference>
<dbReference type="PDB" id="5M1J">
    <property type="method" value="EM"/>
    <property type="resolution" value="3.30 A"/>
    <property type="chains" value="c2=5-67"/>
</dbReference>
<dbReference type="PDB" id="5MC6">
    <property type="method" value="EM"/>
    <property type="resolution" value="3.80 A"/>
    <property type="chains" value="L=1-67"/>
</dbReference>
<dbReference type="PDB" id="6EML">
    <property type="method" value="EM"/>
    <property type="resolution" value="3.60 A"/>
    <property type="chains" value="L=1-67"/>
</dbReference>
<dbReference type="PDB" id="6SNT">
    <property type="method" value="EM"/>
    <property type="resolution" value="2.80 A"/>
    <property type="chains" value="c=1-67"/>
</dbReference>
<dbReference type="PDB" id="6SV4">
    <property type="method" value="EM"/>
    <property type="resolution" value="3.30 A"/>
    <property type="chains" value="L/Lb/Lc=1-67"/>
</dbReference>
<dbReference type="PDB" id="6T7I">
    <property type="method" value="EM"/>
    <property type="resolution" value="3.20 A"/>
    <property type="chains" value="Sc=1-67"/>
</dbReference>
<dbReference type="PDB" id="6T7T">
    <property type="method" value="EM"/>
    <property type="resolution" value="3.10 A"/>
    <property type="chains" value="Sc=1-67"/>
</dbReference>
<dbReference type="PDB" id="6T83">
    <property type="method" value="EM"/>
    <property type="resolution" value="4.00 A"/>
    <property type="chains" value="3/cb=1-67"/>
</dbReference>
<dbReference type="PDB" id="6ZCE">
    <property type="method" value="EM"/>
    <property type="resolution" value="5.30 A"/>
    <property type="chains" value="d=1-67"/>
</dbReference>
<dbReference type="PDB" id="6ZU9">
    <property type="method" value="EM"/>
    <property type="resolution" value="6.20 A"/>
    <property type="chains" value="i=1-67"/>
</dbReference>
<dbReference type="PDB" id="9F9S">
    <property type="method" value="EM"/>
    <property type="resolution" value="2.90 A"/>
    <property type="chains" value="SC=1-67"/>
</dbReference>
<dbReference type="PDBsum" id="5M1J"/>
<dbReference type="PDBsum" id="5MC6"/>
<dbReference type="PDBsum" id="6EML"/>
<dbReference type="PDBsum" id="6SNT"/>
<dbReference type="PDBsum" id="6SV4"/>
<dbReference type="PDBsum" id="6T7I"/>
<dbReference type="PDBsum" id="6T7T"/>
<dbReference type="PDBsum" id="6T83"/>
<dbReference type="PDBsum" id="6ZCE"/>
<dbReference type="PDBsum" id="6ZU9"/>
<dbReference type="PDBsum" id="9F9S"/>
<dbReference type="EMDB" id="EMD-10262"/>
<dbReference type="EMDB" id="EMD-10315"/>
<dbReference type="EMDB" id="EMD-10396"/>
<dbReference type="EMDB" id="EMD-10398"/>
<dbReference type="EMDB" id="EMD-11160"/>
<dbReference type="EMDB" id="EMD-11439"/>
<dbReference type="EMDB" id="EMD-3461"/>
<dbReference type="EMDB" id="EMD-4140"/>
<dbReference type="EMDB" id="EMD-50259"/>
<dbReference type="SMR" id="P0C0X0"/>
<dbReference type="BioGRID" id="31532">
    <property type="interactions" value="233"/>
</dbReference>
<dbReference type="ComplexPortal" id="CPX-1599">
    <property type="entry name" value="40S cytosolic small ribosomal subunit"/>
</dbReference>
<dbReference type="DIP" id="DIP-1389N"/>
<dbReference type="FunCoup" id="P0C0X0">
    <property type="interactions" value="1060"/>
</dbReference>
<dbReference type="IntAct" id="P0C0X0">
    <property type="interactions" value="76"/>
</dbReference>
<dbReference type="MINT" id="P0C0X0"/>
<dbReference type="STRING" id="4932.YLR264W"/>
<dbReference type="iPTMnet" id="P0C0X0"/>
<dbReference type="PaxDb" id="4932-YLR264W"/>
<dbReference type="PeptideAtlas" id="P0C0X0"/>
<dbReference type="TopDownProteomics" id="P0C0X0"/>
<dbReference type="EnsemblFungi" id="YLR264W_mRNA">
    <property type="protein sequence ID" value="YLR264W"/>
    <property type="gene ID" value="YLR264W"/>
</dbReference>
<dbReference type="GeneID" id="850969"/>
<dbReference type="KEGG" id="sce:YLR264W"/>
<dbReference type="AGR" id="SGD:S000004254"/>
<dbReference type="SGD" id="S000004254">
    <property type="gene designation" value="RPS28B"/>
</dbReference>
<dbReference type="VEuPathDB" id="FungiDB:YLR264W"/>
<dbReference type="eggNOG" id="KOG3502">
    <property type="taxonomic scope" value="Eukaryota"/>
</dbReference>
<dbReference type="GeneTree" id="ENSGT00910000144227"/>
<dbReference type="HOGENOM" id="CLU_178987_1_0_1"/>
<dbReference type="InParanoid" id="P0C0X0"/>
<dbReference type="OMA" id="NTGMHGE"/>
<dbReference type="OrthoDB" id="10258930at2759"/>
<dbReference type="BioCyc" id="YEAST:G3O-32364-MONOMER"/>
<dbReference type="Reactome" id="R-SCE-156827">
    <property type="pathway name" value="L13a-mediated translational silencing of Ceruloplasmin expression"/>
</dbReference>
<dbReference type="Reactome" id="R-SCE-1799339">
    <property type="pathway name" value="SRP-dependent cotranslational protein targeting to membrane"/>
</dbReference>
<dbReference type="Reactome" id="R-SCE-72649">
    <property type="pathway name" value="Translation initiation complex formation"/>
</dbReference>
<dbReference type="Reactome" id="R-SCE-72689">
    <property type="pathway name" value="Formation of a pool of free 40S subunits"/>
</dbReference>
<dbReference type="Reactome" id="R-SCE-72695">
    <property type="pathway name" value="Formation of the ternary complex, and subsequently, the 43S complex"/>
</dbReference>
<dbReference type="Reactome" id="R-SCE-72702">
    <property type="pathway name" value="Ribosomal scanning and start codon recognition"/>
</dbReference>
<dbReference type="Reactome" id="R-SCE-72706">
    <property type="pathway name" value="GTP hydrolysis and joining of the 60S ribosomal subunit"/>
</dbReference>
<dbReference type="Reactome" id="R-SCE-975956">
    <property type="pathway name" value="Nonsense Mediated Decay (NMD) independent of the Exon Junction Complex (EJC)"/>
</dbReference>
<dbReference type="Reactome" id="R-SCE-975957">
    <property type="pathway name" value="Nonsense Mediated Decay (NMD) enhanced by the Exon Junction Complex (EJC)"/>
</dbReference>
<dbReference type="BioGRID-ORCS" id="850969">
    <property type="hits" value="9 hits in 10 CRISPR screens"/>
</dbReference>
<dbReference type="PRO" id="PR:P0C0X0"/>
<dbReference type="Proteomes" id="UP000002311">
    <property type="component" value="Chromosome XII"/>
</dbReference>
<dbReference type="RNAct" id="P0C0X0">
    <property type="molecule type" value="protein"/>
</dbReference>
<dbReference type="GO" id="GO:0005829">
    <property type="term" value="C:cytosol"/>
    <property type="evidence" value="ECO:0000304"/>
    <property type="project" value="Reactome"/>
</dbReference>
<dbReference type="GO" id="GO:0022627">
    <property type="term" value="C:cytosolic small ribosomal subunit"/>
    <property type="evidence" value="ECO:0000314"/>
    <property type="project" value="SGD"/>
</dbReference>
<dbReference type="GO" id="GO:0003735">
    <property type="term" value="F:structural constituent of ribosome"/>
    <property type="evidence" value="ECO:0000314"/>
    <property type="project" value="SGD"/>
</dbReference>
<dbReference type="GO" id="GO:0002181">
    <property type="term" value="P:cytoplasmic translation"/>
    <property type="evidence" value="ECO:0000305"/>
    <property type="project" value="SGD"/>
</dbReference>
<dbReference type="GO" id="GO:0030490">
    <property type="term" value="P:maturation of SSU-rRNA"/>
    <property type="evidence" value="ECO:0000318"/>
    <property type="project" value="GO_Central"/>
</dbReference>
<dbReference type="GO" id="GO:1900153">
    <property type="term" value="P:positive regulation of nuclear-transcribed mRNA catabolic process, deadenylation-dependent decay"/>
    <property type="evidence" value="ECO:0000315"/>
    <property type="project" value="SGD"/>
</dbReference>
<dbReference type="GO" id="GO:0000028">
    <property type="term" value="P:ribosomal small subunit assembly"/>
    <property type="evidence" value="ECO:0000318"/>
    <property type="project" value="GO_Central"/>
</dbReference>
<dbReference type="GO" id="GO:0000054">
    <property type="term" value="P:ribosomal subunit export from nucleus"/>
    <property type="evidence" value="ECO:0000316"/>
    <property type="project" value="SGD"/>
</dbReference>
<dbReference type="CDD" id="cd04457">
    <property type="entry name" value="S1_S28E"/>
    <property type="match status" value="1"/>
</dbReference>
<dbReference type="FunFam" id="2.40.50.140:FF:000025">
    <property type="entry name" value="40S ribosomal protein S28"/>
    <property type="match status" value="1"/>
</dbReference>
<dbReference type="Gene3D" id="2.40.50.140">
    <property type="entry name" value="Nucleic acid-binding proteins"/>
    <property type="match status" value="1"/>
</dbReference>
<dbReference type="HAMAP" id="MF_00292">
    <property type="entry name" value="Ribosomal_eS28"/>
    <property type="match status" value="1"/>
</dbReference>
<dbReference type="InterPro" id="IPR012340">
    <property type="entry name" value="NA-bd_OB-fold"/>
</dbReference>
<dbReference type="InterPro" id="IPR000289">
    <property type="entry name" value="Ribosomal_eS28"/>
</dbReference>
<dbReference type="InterPro" id="IPR028626">
    <property type="entry name" value="Ribosomal_eS28_CS"/>
</dbReference>
<dbReference type="PANTHER" id="PTHR10769">
    <property type="entry name" value="40S RIBOSOMAL PROTEIN S28"/>
    <property type="match status" value="1"/>
</dbReference>
<dbReference type="PANTHER" id="PTHR10769:SF3">
    <property type="entry name" value="SMALL RIBOSOMAL SUBUNIT PROTEIN ES28"/>
    <property type="match status" value="1"/>
</dbReference>
<dbReference type="Pfam" id="PF01200">
    <property type="entry name" value="Ribosomal_S28e"/>
    <property type="match status" value="1"/>
</dbReference>
<dbReference type="SUPFAM" id="SSF50249">
    <property type="entry name" value="Nucleic acid-binding proteins"/>
    <property type="match status" value="1"/>
</dbReference>
<dbReference type="PROSITE" id="PS00961">
    <property type="entry name" value="RIBOSOMAL_S28E"/>
    <property type="match status" value="1"/>
</dbReference>
<organism>
    <name type="scientific">Saccharomyces cerevisiae (strain ATCC 204508 / S288c)</name>
    <name type="common">Baker's yeast</name>
    <dbReference type="NCBI Taxonomy" id="559292"/>
    <lineage>
        <taxon>Eukaryota</taxon>
        <taxon>Fungi</taxon>
        <taxon>Dikarya</taxon>
        <taxon>Ascomycota</taxon>
        <taxon>Saccharomycotina</taxon>
        <taxon>Saccharomycetes</taxon>
        <taxon>Saccharomycetales</taxon>
        <taxon>Saccharomycetaceae</taxon>
        <taxon>Saccharomyces</taxon>
    </lineage>
</organism>
<comment type="function">
    <text evidence="8">Component of the ribosome, a large ribonucleoprotein complex responsible for the synthesis of proteins in the cell. The small ribosomal subunit (SSU) binds messenger RNAs (mRNAs) and translates the encoded message by selecting cognate aminoacyl-transfer RNA (tRNA) molecules. The large subunit (LSU) contains the ribosomal catalytic site termed the peptidyl transferase center (PTC), which catalyzes the formation of peptide bonds, thereby polymerizing the amino acids delivered by tRNAs into a polypeptide chain. The nascent polypeptides leave the ribosome through a tunnel in the LSU and interact with protein factors that function in enzymatic processing, targeting, and the membrane insertion of nascent chains at the exit of the ribosomal tunnel.</text>
</comment>
<comment type="subunit">
    <text evidence="4 9">Component of the small ribosomal subunit (SSU). Mature yeast ribosomes consist of a small (40S) and a large (60S) subunit. The 40S small subunit contains 1 molecule of ribosomal RNA (18S rRNA) and 33 different proteins (encoded by 57 genes). The large 60S subunit contains 3 rRNA molecules (25S, 5.8S and 5S rRNA) and 46 different proteins (encoded by 81 genes) (PubMed:22096102, PubMed:9559554).</text>
</comment>
<comment type="subcellular location">
    <subcellularLocation>
        <location evidence="2 4">Cytoplasm</location>
    </subcellularLocation>
</comment>
<comment type="PTM">
    <text evidence="1">N-terminally acetylated by acetyltransferase NatB.</text>
</comment>
<comment type="miscellaneous">
    <text evidence="3">Present with 8600 molecules/cell in log phase SD medium.</text>
</comment>
<comment type="miscellaneous">
    <text evidence="7">There are 2 genes for eS28 in yeast.</text>
</comment>
<comment type="similarity">
    <text evidence="7">Belongs to the eukaryotic ribosomal protein eS28 family.</text>
</comment>